<sequence>IVGGSEATSGQFPYQXSFQD</sequence>
<dbReference type="EC" id="3.4.21.32"/>
<dbReference type="PIR" id="D34817">
    <property type="entry name" value="D34817"/>
</dbReference>
<dbReference type="MEROPS" id="S01.122"/>
<dbReference type="GO" id="GO:0008236">
    <property type="term" value="F:serine-type peptidase activity"/>
    <property type="evidence" value="ECO:0007669"/>
    <property type="project" value="UniProtKB-KW"/>
</dbReference>
<dbReference type="GO" id="GO:0030574">
    <property type="term" value="P:collagen catabolic process"/>
    <property type="evidence" value="ECO:0007669"/>
    <property type="project" value="UniProtKB-KW"/>
</dbReference>
<dbReference type="GO" id="GO:0006508">
    <property type="term" value="P:proteolysis"/>
    <property type="evidence" value="ECO:0007669"/>
    <property type="project" value="UniProtKB-KW"/>
</dbReference>
<feature type="chain" id="PRO_0000088669" description="Collagenolytic protease 36 kDa C">
    <location>
        <begin position="1"/>
        <end position="20" status="greater than"/>
    </location>
</feature>
<feature type="domain" description="Peptidase S1" evidence="1">
    <location>
        <begin position="1"/>
        <end position="20" status="greater than"/>
    </location>
</feature>
<feature type="region of interest" description="Disordered" evidence="2">
    <location>
        <begin position="1"/>
        <end position="20"/>
    </location>
</feature>
<feature type="non-terminal residue">
    <location>
        <position position="20"/>
    </location>
</feature>
<organism>
    <name type="scientific">Paralithodes camtschaticus</name>
    <name type="common">Red king crab</name>
    <name type="synonym">Maja camtschatica</name>
    <dbReference type="NCBI Taxonomy" id="6741"/>
    <lineage>
        <taxon>Eukaryota</taxon>
        <taxon>Metazoa</taxon>
        <taxon>Ecdysozoa</taxon>
        <taxon>Arthropoda</taxon>
        <taxon>Crustacea</taxon>
        <taxon>Multicrustacea</taxon>
        <taxon>Malacostraca</taxon>
        <taxon>Eumalacostraca</taxon>
        <taxon>Eucarida</taxon>
        <taxon>Decapoda</taxon>
        <taxon>Pleocyemata</taxon>
        <taxon>Anomura</taxon>
        <taxon>Paguroidea</taxon>
        <taxon>Lithodidae</taxon>
        <taxon>Paralithodes</taxon>
    </lineage>
</organism>
<evidence type="ECO:0000255" key="1">
    <source>
        <dbReference type="PROSITE-ProRule" id="PRU00274"/>
    </source>
</evidence>
<evidence type="ECO:0000256" key="2">
    <source>
        <dbReference type="SAM" id="MobiDB-lite"/>
    </source>
</evidence>
<accession>P20734</accession>
<name>COGC_PARCM</name>
<reference key="1">
    <citation type="journal article" date="1990" name="Biochem. Biophys. Res. Commun.">
        <title>The isolation and properties of collagenolytic proteases from crab hepatopancreas.</title>
        <authorList>
            <person name="Klimova O.A."/>
            <person name="Borukhov S.I."/>
            <person name="Solovyeva N.I."/>
            <person name="Balaevskaya T.O."/>
            <person name="Strongin A.Y."/>
        </authorList>
    </citation>
    <scope>PROTEIN SEQUENCE</scope>
    <source>
        <tissue>Hepatopancreas</tissue>
    </source>
</reference>
<proteinExistence type="evidence at protein level"/>
<comment type="function">
    <text>This enzyme is a serine protease capable of degrading the native triple helix of collagen.</text>
</comment>
<comment type="catalytic activity">
    <reaction>
        <text>Hydrolysis of proteins, with broad specificity for peptide bonds. Native collagen is cleaved about 75% of the length of the molecule from the N-terminus. Low activity on small molecule substrates of both trypsin and chymotrypsin.</text>
        <dbReference type="EC" id="3.4.21.32"/>
    </reaction>
</comment>
<comment type="similarity">
    <text evidence="1">Belongs to the peptidase S1 family.</text>
</comment>
<keyword id="KW-0177">Collagen degradation</keyword>
<keyword id="KW-0903">Direct protein sequencing</keyword>
<keyword id="KW-0378">Hydrolase</keyword>
<keyword id="KW-0645">Protease</keyword>
<keyword id="KW-0720">Serine protease</keyword>
<protein>
    <recommendedName>
        <fullName>Collagenolytic protease 36 kDa C</fullName>
        <ecNumber>3.4.21.32</ecNumber>
    </recommendedName>
</protein>